<protein>
    <recommendedName>
        <fullName evidence="1">Adenine phosphoribosyltransferase</fullName>
        <shortName evidence="1">APRT</shortName>
        <ecNumber evidence="1">2.4.2.7</ecNumber>
    </recommendedName>
</protein>
<accession>A7MJV7</accession>
<comment type="function">
    <text evidence="1">Catalyzes a salvage reaction resulting in the formation of AMP, that is energically less costly than de novo synthesis.</text>
</comment>
<comment type="catalytic activity">
    <reaction evidence="1">
        <text>AMP + diphosphate = 5-phospho-alpha-D-ribose 1-diphosphate + adenine</text>
        <dbReference type="Rhea" id="RHEA:16609"/>
        <dbReference type="ChEBI" id="CHEBI:16708"/>
        <dbReference type="ChEBI" id="CHEBI:33019"/>
        <dbReference type="ChEBI" id="CHEBI:58017"/>
        <dbReference type="ChEBI" id="CHEBI:456215"/>
        <dbReference type="EC" id="2.4.2.7"/>
    </reaction>
</comment>
<comment type="pathway">
    <text evidence="1">Purine metabolism; AMP biosynthesis via salvage pathway; AMP from adenine: step 1/1.</text>
</comment>
<comment type="subunit">
    <text evidence="1">Homodimer.</text>
</comment>
<comment type="subcellular location">
    <subcellularLocation>
        <location evidence="1">Cytoplasm</location>
    </subcellularLocation>
</comment>
<comment type="similarity">
    <text evidence="1">Belongs to the purine/pyrimidine phosphoribosyltransferase family.</text>
</comment>
<dbReference type="EC" id="2.4.2.7" evidence="1"/>
<dbReference type="EMBL" id="CP000783">
    <property type="protein sequence ID" value="ABU78031.1"/>
    <property type="molecule type" value="Genomic_DNA"/>
</dbReference>
<dbReference type="RefSeq" id="WP_004386902.1">
    <property type="nucleotide sequence ID" value="NC_009778.1"/>
</dbReference>
<dbReference type="SMR" id="A7MJV7"/>
<dbReference type="GeneID" id="56731592"/>
<dbReference type="KEGG" id="esa:ESA_02801"/>
<dbReference type="HOGENOM" id="CLU_063339_3_0_6"/>
<dbReference type="UniPathway" id="UPA00588">
    <property type="reaction ID" value="UER00646"/>
</dbReference>
<dbReference type="Proteomes" id="UP000000260">
    <property type="component" value="Chromosome"/>
</dbReference>
<dbReference type="GO" id="GO:0005829">
    <property type="term" value="C:cytosol"/>
    <property type="evidence" value="ECO:0007669"/>
    <property type="project" value="TreeGrafter"/>
</dbReference>
<dbReference type="GO" id="GO:0003999">
    <property type="term" value="F:adenine phosphoribosyltransferase activity"/>
    <property type="evidence" value="ECO:0007669"/>
    <property type="project" value="UniProtKB-UniRule"/>
</dbReference>
<dbReference type="GO" id="GO:0006168">
    <property type="term" value="P:adenine salvage"/>
    <property type="evidence" value="ECO:0007669"/>
    <property type="project" value="InterPro"/>
</dbReference>
<dbReference type="GO" id="GO:0044209">
    <property type="term" value="P:AMP salvage"/>
    <property type="evidence" value="ECO:0007669"/>
    <property type="project" value="UniProtKB-UniRule"/>
</dbReference>
<dbReference type="GO" id="GO:0006166">
    <property type="term" value="P:purine ribonucleoside salvage"/>
    <property type="evidence" value="ECO:0007669"/>
    <property type="project" value="UniProtKB-KW"/>
</dbReference>
<dbReference type="CDD" id="cd06223">
    <property type="entry name" value="PRTases_typeI"/>
    <property type="match status" value="1"/>
</dbReference>
<dbReference type="FunFam" id="3.40.50.2020:FF:000004">
    <property type="entry name" value="Adenine phosphoribosyltransferase"/>
    <property type="match status" value="1"/>
</dbReference>
<dbReference type="Gene3D" id="3.40.50.2020">
    <property type="match status" value="1"/>
</dbReference>
<dbReference type="HAMAP" id="MF_00004">
    <property type="entry name" value="Aden_phosphoribosyltr"/>
    <property type="match status" value="1"/>
</dbReference>
<dbReference type="InterPro" id="IPR005764">
    <property type="entry name" value="Ade_phspho_trans"/>
</dbReference>
<dbReference type="InterPro" id="IPR050120">
    <property type="entry name" value="Adenine_PRTase"/>
</dbReference>
<dbReference type="InterPro" id="IPR000836">
    <property type="entry name" value="PRibTrfase_dom"/>
</dbReference>
<dbReference type="InterPro" id="IPR029057">
    <property type="entry name" value="PRTase-like"/>
</dbReference>
<dbReference type="NCBIfam" id="TIGR01090">
    <property type="entry name" value="apt"/>
    <property type="match status" value="1"/>
</dbReference>
<dbReference type="NCBIfam" id="NF002632">
    <property type="entry name" value="PRK02304.1-1"/>
    <property type="match status" value="1"/>
</dbReference>
<dbReference type="NCBIfam" id="NF002633">
    <property type="entry name" value="PRK02304.1-2"/>
    <property type="match status" value="1"/>
</dbReference>
<dbReference type="NCBIfam" id="NF002634">
    <property type="entry name" value="PRK02304.1-3"/>
    <property type="match status" value="1"/>
</dbReference>
<dbReference type="NCBIfam" id="NF002636">
    <property type="entry name" value="PRK02304.1-5"/>
    <property type="match status" value="1"/>
</dbReference>
<dbReference type="PANTHER" id="PTHR11776">
    <property type="entry name" value="ADENINE PHOSPHORIBOSYLTRANSFERASE"/>
    <property type="match status" value="1"/>
</dbReference>
<dbReference type="PANTHER" id="PTHR11776:SF7">
    <property type="entry name" value="PHOSPHORIBOSYLTRANSFERASE DOMAIN-CONTAINING PROTEIN"/>
    <property type="match status" value="1"/>
</dbReference>
<dbReference type="Pfam" id="PF00156">
    <property type="entry name" value="Pribosyltran"/>
    <property type="match status" value="1"/>
</dbReference>
<dbReference type="SUPFAM" id="SSF53271">
    <property type="entry name" value="PRTase-like"/>
    <property type="match status" value="1"/>
</dbReference>
<dbReference type="PROSITE" id="PS00103">
    <property type="entry name" value="PUR_PYR_PR_TRANSFER"/>
    <property type="match status" value="1"/>
</dbReference>
<keyword id="KW-0963">Cytoplasm</keyword>
<keyword id="KW-0328">Glycosyltransferase</keyword>
<keyword id="KW-0660">Purine salvage</keyword>
<keyword id="KW-1185">Reference proteome</keyword>
<keyword id="KW-0808">Transferase</keyword>
<reference key="1">
    <citation type="journal article" date="2010" name="PLoS ONE">
        <title>Genome sequence of Cronobacter sakazakii BAA-894 and comparative genomic hybridization analysis with other Cronobacter species.</title>
        <authorList>
            <person name="Kucerova E."/>
            <person name="Clifton S.W."/>
            <person name="Xia X.Q."/>
            <person name="Long F."/>
            <person name="Porwollik S."/>
            <person name="Fulton L."/>
            <person name="Fronick C."/>
            <person name="Minx P."/>
            <person name="Kyung K."/>
            <person name="Warren W."/>
            <person name="Fulton R."/>
            <person name="Feng D."/>
            <person name="Wollam A."/>
            <person name="Shah N."/>
            <person name="Bhonagiri V."/>
            <person name="Nash W.E."/>
            <person name="Hallsworth-Pepin K."/>
            <person name="Wilson R.K."/>
            <person name="McClelland M."/>
            <person name="Forsythe S.J."/>
        </authorList>
    </citation>
    <scope>NUCLEOTIDE SEQUENCE [LARGE SCALE GENOMIC DNA]</scope>
    <source>
        <strain>ATCC BAA-894</strain>
    </source>
</reference>
<feature type="chain" id="PRO_1000000281" description="Adenine phosphoribosyltransferase">
    <location>
        <begin position="1"/>
        <end position="183"/>
    </location>
</feature>
<name>APT_CROS8</name>
<proteinExistence type="inferred from homology"/>
<gene>
    <name evidence="1" type="primary">apt</name>
    <name type="ordered locus">ESA_02801</name>
</gene>
<organism>
    <name type="scientific">Cronobacter sakazakii (strain ATCC BAA-894)</name>
    <name type="common">Enterobacter sakazakii</name>
    <dbReference type="NCBI Taxonomy" id="290339"/>
    <lineage>
        <taxon>Bacteria</taxon>
        <taxon>Pseudomonadati</taxon>
        <taxon>Pseudomonadota</taxon>
        <taxon>Gammaproteobacteria</taxon>
        <taxon>Enterobacterales</taxon>
        <taxon>Enterobacteriaceae</taxon>
        <taxon>Cronobacter</taxon>
    </lineage>
</organism>
<evidence type="ECO:0000255" key="1">
    <source>
        <dbReference type="HAMAP-Rule" id="MF_00004"/>
    </source>
</evidence>
<sequence>MTATAQQLEYLKNSIKSIQDYPKPGILFRDVTSLLEDPKAYALSIELLVERYKNAGITKVVGTEARGFLFGAPVALALGVGFVPVRKPRKLPRETIAESYELEYGTDQLEIHVDAIKPGDKVLVVDDLLATGGTIEATVKLIRRLGGEVTDAAFIINLFDIGGEERLNKQGITCYSLVPFPGH</sequence>